<reference key="1">
    <citation type="journal article" date="2005" name="Genome Res.">
        <title>Complete genome sequence of the hyperthermophilic archaeon Thermococcus kodakaraensis KOD1 and comparison with Pyrococcus genomes.</title>
        <authorList>
            <person name="Fukui T."/>
            <person name="Atomi H."/>
            <person name="Kanai T."/>
            <person name="Matsumi R."/>
            <person name="Fujiwara S."/>
            <person name="Imanaka T."/>
        </authorList>
    </citation>
    <scope>NUCLEOTIDE SEQUENCE [LARGE SCALE GENOMIC DNA]</scope>
    <source>
        <strain>ATCC BAA-918 / JCM 12380 / KOD1</strain>
    </source>
</reference>
<sequence>MEEKRKKIRVLVGGVFDILHVGHIHFLKQAKELGDELVVIVAHDETVRMQKRREPINPAEDRAELLRAIRYVDEVYIGTPGTIDMELVKRIDPDVIAIGPDQFFNCEKLKEELRKHGINAEVIRIPYLYKSDRAKTSKIIQRIVETFCE</sequence>
<dbReference type="EC" id="2.7.7.2" evidence="1"/>
<dbReference type="EMBL" id="AP006878">
    <property type="protein sequence ID" value="BAD86463.1"/>
    <property type="molecule type" value="Genomic_DNA"/>
</dbReference>
<dbReference type="RefSeq" id="WP_011251224.1">
    <property type="nucleotide sequence ID" value="NC_006624.1"/>
</dbReference>
<dbReference type="SMR" id="Q5JHT4"/>
<dbReference type="FunCoup" id="Q5JHT4">
    <property type="interactions" value="8"/>
</dbReference>
<dbReference type="STRING" id="69014.TK2274"/>
<dbReference type="EnsemblBacteria" id="BAD86463">
    <property type="protein sequence ID" value="BAD86463"/>
    <property type="gene ID" value="TK2274"/>
</dbReference>
<dbReference type="GeneID" id="78448820"/>
<dbReference type="KEGG" id="tko:TK2274"/>
<dbReference type="PATRIC" id="fig|69014.16.peg.2229"/>
<dbReference type="eggNOG" id="arCOG01222">
    <property type="taxonomic scope" value="Archaea"/>
</dbReference>
<dbReference type="HOGENOM" id="CLU_034585_2_1_2"/>
<dbReference type="InParanoid" id="Q5JHT4"/>
<dbReference type="OrthoDB" id="1912at2157"/>
<dbReference type="PhylomeDB" id="Q5JHT4"/>
<dbReference type="UniPathway" id="UPA00277">
    <property type="reaction ID" value="UER00407"/>
</dbReference>
<dbReference type="Proteomes" id="UP000000536">
    <property type="component" value="Chromosome"/>
</dbReference>
<dbReference type="GO" id="GO:0005524">
    <property type="term" value="F:ATP binding"/>
    <property type="evidence" value="ECO:0007669"/>
    <property type="project" value="UniProtKB-UniRule"/>
</dbReference>
<dbReference type="GO" id="GO:0003919">
    <property type="term" value="F:FMN adenylyltransferase activity"/>
    <property type="evidence" value="ECO:0007669"/>
    <property type="project" value="UniProtKB-UniRule"/>
</dbReference>
<dbReference type="GO" id="GO:0006747">
    <property type="term" value="P:FAD biosynthetic process"/>
    <property type="evidence" value="ECO:0007669"/>
    <property type="project" value="UniProtKB-UniRule"/>
</dbReference>
<dbReference type="GO" id="GO:0046444">
    <property type="term" value="P:FMN metabolic process"/>
    <property type="evidence" value="ECO:0007669"/>
    <property type="project" value="UniProtKB-UniRule"/>
</dbReference>
<dbReference type="Gene3D" id="3.40.50.620">
    <property type="entry name" value="HUPs"/>
    <property type="match status" value="1"/>
</dbReference>
<dbReference type="HAMAP" id="MF_02115">
    <property type="entry name" value="FAD_synth_arch"/>
    <property type="match status" value="1"/>
</dbReference>
<dbReference type="InterPro" id="IPR050385">
    <property type="entry name" value="Archaeal_FAD_synthase"/>
</dbReference>
<dbReference type="InterPro" id="IPR004821">
    <property type="entry name" value="Cyt_trans-like"/>
</dbReference>
<dbReference type="InterPro" id="IPR024902">
    <property type="entry name" value="FAD_synth_RibL"/>
</dbReference>
<dbReference type="InterPro" id="IPR014729">
    <property type="entry name" value="Rossmann-like_a/b/a_fold"/>
</dbReference>
<dbReference type="NCBIfam" id="TIGR00125">
    <property type="entry name" value="cyt_tran_rel"/>
    <property type="match status" value="1"/>
</dbReference>
<dbReference type="PANTHER" id="PTHR43793">
    <property type="entry name" value="FAD SYNTHASE"/>
    <property type="match status" value="1"/>
</dbReference>
<dbReference type="PANTHER" id="PTHR43793:SF1">
    <property type="entry name" value="FAD SYNTHASE"/>
    <property type="match status" value="1"/>
</dbReference>
<dbReference type="Pfam" id="PF01467">
    <property type="entry name" value="CTP_transf_like"/>
    <property type="match status" value="1"/>
</dbReference>
<dbReference type="SUPFAM" id="SSF52374">
    <property type="entry name" value="Nucleotidylyl transferase"/>
    <property type="match status" value="1"/>
</dbReference>
<protein>
    <recommendedName>
        <fullName evidence="1">FAD synthase</fullName>
        <ecNumber evidence="1">2.7.7.2</ecNumber>
    </recommendedName>
    <alternativeName>
        <fullName evidence="1">FMN adenylyltransferase</fullName>
    </alternativeName>
    <alternativeName>
        <fullName evidence="1">Flavin adenine dinucleotide synthase</fullName>
    </alternativeName>
</protein>
<feature type="chain" id="PRO_0000406282" description="FAD synthase">
    <location>
        <begin position="1"/>
        <end position="149"/>
    </location>
</feature>
<feature type="binding site" evidence="1">
    <location>
        <begin position="15"/>
        <end position="16"/>
    </location>
    <ligand>
        <name>ATP</name>
        <dbReference type="ChEBI" id="CHEBI:30616"/>
    </ligand>
</feature>
<feature type="binding site" evidence="1">
    <location>
        <begin position="20"/>
        <end position="23"/>
    </location>
    <ligand>
        <name>ATP</name>
        <dbReference type="ChEBI" id="CHEBI:30616"/>
    </ligand>
</feature>
<feature type="binding site" evidence="1">
    <location>
        <position position="101"/>
    </location>
    <ligand>
        <name>ATP</name>
        <dbReference type="ChEBI" id="CHEBI:30616"/>
    </ligand>
</feature>
<name>RIBL_THEKO</name>
<evidence type="ECO:0000255" key="1">
    <source>
        <dbReference type="HAMAP-Rule" id="MF_02115"/>
    </source>
</evidence>
<organism>
    <name type="scientific">Thermococcus kodakarensis (strain ATCC BAA-918 / JCM 12380 / KOD1)</name>
    <name type="common">Pyrococcus kodakaraensis (strain KOD1)</name>
    <dbReference type="NCBI Taxonomy" id="69014"/>
    <lineage>
        <taxon>Archaea</taxon>
        <taxon>Methanobacteriati</taxon>
        <taxon>Methanobacteriota</taxon>
        <taxon>Thermococci</taxon>
        <taxon>Thermococcales</taxon>
        <taxon>Thermococcaceae</taxon>
        <taxon>Thermococcus</taxon>
    </lineage>
</organism>
<proteinExistence type="inferred from homology"/>
<keyword id="KW-0067">ATP-binding</keyword>
<keyword id="KW-0274">FAD</keyword>
<keyword id="KW-0285">Flavoprotein</keyword>
<keyword id="KW-0288">FMN</keyword>
<keyword id="KW-0547">Nucleotide-binding</keyword>
<keyword id="KW-0548">Nucleotidyltransferase</keyword>
<keyword id="KW-1185">Reference proteome</keyword>
<keyword id="KW-0808">Transferase</keyword>
<gene>
    <name evidence="1" type="primary">ribL</name>
    <name type="ordered locus">TK2274</name>
</gene>
<comment type="function">
    <text evidence="1">Catalyzes the transfer of the AMP portion of ATP to flavin mononucleotide (FMN) to produce flavin adenine dinucleotide (FAD) coenzyme.</text>
</comment>
<comment type="catalytic activity">
    <reaction evidence="1">
        <text>FMN + ATP + H(+) = FAD + diphosphate</text>
        <dbReference type="Rhea" id="RHEA:17237"/>
        <dbReference type="ChEBI" id="CHEBI:15378"/>
        <dbReference type="ChEBI" id="CHEBI:30616"/>
        <dbReference type="ChEBI" id="CHEBI:33019"/>
        <dbReference type="ChEBI" id="CHEBI:57692"/>
        <dbReference type="ChEBI" id="CHEBI:58210"/>
        <dbReference type="EC" id="2.7.7.2"/>
    </reaction>
</comment>
<comment type="cofactor">
    <cofactor evidence="1">
        <name>a divalent metal cation</name>
        <dbReference type="ChEBI" id="CHEBI:60240"/>
    </cofactor>
</comment>
<comment type="pathway">
    <text evidence="1">Cofactor biosynthesis; FAD biosynthesis; FAD from FMN: step 1/1.</text>
</comment>
<comment type="subunit">
    <text evidence="1">Homodimer.</text>
</comment>
<comment type="similarity">
    <text evidence="1">Belongs to the archaeal FAD synthase family.</text>
</comment>
<accession>Q5JHT4</accession>